<keyword id="KW-0963">Cytoplasm</keyword>
<keyword id="KW-0255">Endonuclease</keyword>
<keyword id="KW-0378">Hydrolase</keyword>
<keyword id="KW-0460">Magnesium</keyword>
<keyword id="KW-0479">Metal-binding</keyword>
<keyword id="KW-0540">Nuclease</keyword>
<keyword id="KW-1185">Reference proteome</keyword>
<protein>
    <recommendedName>
        <fullName evidence="1">Ribonuclease H</fullName>
        <shortName evidence="1">RNase H</shortName>
        <ecNumber evidence="1">3.1.26.4</ecNumber>
    </recommendedName>
</protein>
<name>RNH_POLNA</name>
<organism>
    <name type="scientific">Polaromonas naphthalenivorans (strain CJ2)</name>
    <dbReference type="NCBI Taxonomy" id="365044"/>
    <lineage>
        <taxon>Bacteria</taxon>
        <taxon>Pseudomonadati</taxon>
        <taxon>Pseudomonadota</taxon>
        <taxon>Betaproteobacteria</taxon>
        <taxon>Burkholderiales</taxon>
        <taxon>Comamonadaceae</taxon>
        <taxon>Polaromonas</taxon>
    </lineage>
</organism>
<sequence>MTDSAAEPTISQPQHVVIYTDGACKGNPGPGGWGALLASGGTEKEIFGGEMGTTNNRMEMTAVIEALAALKKPCTVTLYLDSQYVLKGITEWIHGWKARGWRTAAKAPVKNVDLWQRLDALLVSSGHSIDWRWVRGHNGDPGNERADALANKGVERALGRL</sequence>
<reference key="1">
    <citation type="journal article" date="2009" name="Environ. Microbiol.">
        <title>The genome of Polaromonas naphthalenivorans strain CJ2, isolated from coal tar-contaminated sediment, reveals physiological and metabolic versatility and evolution through extensive horizontal gene transfer.</title>
        <authorList>
            <person name="Yagi J.M."/>
            <person name="Sims D."/>
            <person name="Brettin T."/>
            <person name="Bruce D."/>
            <person name="Madsen E.L."/>
        </authorList>
    </citation>
    <scope>NUCLEOTIDE SEQUENCE [LARGE SCALE GENOMIC DNA]</scope>
    <source>
        <strain>CJ2</strain>
    </source>
</reference>
<comment type="function">
    <text evidence="1">Endonuclease that specifically degrades the RNA of RNA-DNA hybrids.</text>
</comment>
<comment type="catalytic activity">
    <reaction evidence="1">
        <text>Endonucleolytic cleavage to 5'-phosphomonoester.</text>
        <dbReference type="EC" id="3.1.26.4"/>
    </reaction>
</comment>
<comment type="cofactor">
    <cofactor evidence="1">
        <name>Mg(2+)</name>
        <dbReference type="ChEBI" id="CHEBI:18420"/>
    </cofactor>
    <text evidence="1">Binds 1 Mg(2+) ion per subunit. May bind a second metal ion at a regulatory site, or after substrate binding.</text>
</comment>
<comment type="subunit">
    <text evidence="1">Monomer.</text>
</comment>
<comment type="subcellular location">
    <subcellularLocation>
        <location evidence="1">Cytoplasm</location>
    </subcellularLocation>
</comment>
<comment type="similarity">
    <text evidence="1">Belongs to the RNase H family.</text>
</comment>
<feature type="chain" id="PRO_0000332646" description="Ribonuclease H">
    <location>
        <begin position="1"/>
        <end position="161"/>
    </location>
</feature>
<feature type="domain" description="RNase H type-1" evidence="2">
    <location>
        <begin position="12"/>
        <end position="155"/>
    </location>
</feature>
<feature type="binding site" evidence="1">
    <location>
        <position position="21"/>
    </location>
    <ligand>
        <name>Mg(2+)</name>
        <dbReference type="ChEBI" id="CHEBI:18420"/>
        <label>1</label>
    </ligand>
</feature>
<feature type="binding site" evidence="1">
    <location>
        <position position="21"/>
    </location>
    <ligand>
        <name>Mg(2+)</name>
        <dbReference type="ChEBI" id="CHEBI:18420"/>
        <label>2</label>
    </ligand>
</feature>
<feature type="binding site" evidence="1">
    <location>
        <position position="59"/>
    </location>
    <ligand>
        <name>Mg(2+)</name>
        <dbReference type="ChEBI" id="CHEBI:18420"/>
        <label>1</label>
    </ligand>
</feature>
<feature type="binding site" evidence="1">
    <location>
        <position position="81"/>
    </location>
    <ligand>
        <name>Mg(2+)</name>
        <dbReference type="ChEBI" id="CHEBI:18420"/>
        <label>1</label>
    </ligand>
</feature>
<feature type="binding site" evidence="1">
    <location>
        <position position="147"/>
    </location>
    <ligand>
        <name>Mg(2+)</name>
        <dbReference type="ChEBI" id="CHEBI:18420"/>
        <label>2</label>
    </ligand>
</feature>
<evidence type="ECO:0000255" key="1">
    <source>
        <dbReference type="HAMAP-Rule" id="MF_00042"/>
    </source>
</evidence>
<evidence type="ECO:0000255" key="2">
    <source>
        <dbReference type="PROSITE-ProRule" id="PRU00408"/>
    </source>
</evidence>
<dbReference type="EC" id="3.1.26.4" evidence="1"/>
<dbReference type="EMBL" id="CP000529">
    <property type="protein sequence ID" value="ABM36993.1"/>
    <property type="molecule type" value="Genomic_DNA"/>
</dbReference>
<dbReference type="RefSeq" id="WP_011801079.1">
    <property type="nucleotide sequence ID" value="NC_008781.1"/>
</dbReference>
<dbReference type="SMR" id="A1VMW5"/>
<dbReference type="STRING" id="365044.Pnap_1680"/>
<dbReference type="KEGG" id="pna:Pnap_1680"/>
<dbReference type="eggNOG" id="COG0328">
    <property type="taxonomic scope" value="Bacteria"/>
</dbReference>
<dbReference type="HOGENOM" id="CLU_030894_6_0_4"/>
<dbReference type="OrthoDB" id="7845843at2"/>
<dbReference type="Proteomes" id="UP000000644">
    <property type="component" value="Chromosome"/>
</dbReference>
<dbReference type="GO" id="GO:0005737">
    <property type="term" value="C:cytoplasm"/>
    <property type="evidence" value="ECO:0007669"/>
    <property type="project" value="UniProtKB-SubCell"/>
</dbReference>
<dbReference type="GO" id="GO:0000287">
    <property type="term" value="F:magnesium ion binding"/>
    <property type="evidence" value="ECO:0007669"/>
    <property type="project" value="UniProtKB-UniRule"/>
</dbReference>
<dbReference type="GO" id="GO:0003676">
    <property type="term" value="F:nucleic acid binding"/>
    <property type="evidence" value="ECO:0007669"/>
    <property type="project" value="InterPro"/>
</dbReference>
<dbReference type="GO" id="GO:0004523">
    <property type="term" value="F:RNA-DNA hybrid ribonuclease activity"/>
    <property type="evidence" value="ECO:0007669"/>
    <property type="project" value="UniProtKB-UniRule"/>
</dbReference>
<dbReference type="GO" id="GO:0043137">
    <property type="term" value="P:DNA replication, removal of RNA primer"/>
    <property type="evidence" value="ECO:0007669"/>
    <property type="project" value="TreeGrafter"/>
</dbReference>
<dbReference type="CDD" id="cd09278">
    <property type="entry name" value="RNase_HI_prokaryote_like"/>
    <property type="match status" value="1"/>
</dbReference>
<dbReference type="FunFam" id="3.30.420.10:FF:000089">
    <property type="entry name" value="Ribonuclease H"/>
    <property type="match status" value="1"/>
</dbReference>
<dbReference type="Gene3D" id="3.30.420.10">
    <property type="entry name" value="Ribonuclease H-like superfamily/Ribonuclease H"/>
    <property type="match status" value="1"/>
</dbReference>
<dbReference type="HAMAP" id="MF_00042">
    <property type="entry name" value="RNase_H"/>
    <property type="match status" value="1"/>
</dbReference>
<dbReference type="InterPro" id="IPR050092">
    <property type="entry name" value="RNase_H"/>
</dbReference>
<dbReference type="InterPro" id="IPR012337">
    <property type="entry name" value="RNaseH-like_sf"/>
</dbReference>
<dbReference type="InterPro" id="IPR002156">
    <property type="entry name" value="RNaseH_domain"/>
</dbReference>
<dbReference type="InterPro" id="IPR036397">
    <property type="entry name" value="RNaseH_sf"/>
</dbReference>
<dbReference type="InterPro" id="IPR022892">
    <property type="entry name" value="RNaseHI"/>
</dbReference>
<dbReference type="NCBIfam" id="NF001236">
    <property type="entry name" value="PRK00203.1"/>
    <property type="match status" value="1"/>
</dbReference>
<dbReference type="PANTHER" id="PTHR10642">
    <property type="entry name" value="RIBONUCLEASE H1"/>
    <property type="match status" value="1"/>
</dbReference>
<dbReference type="PANTHER" id="PTHR10642:SF26">
    <property type="entry name" value="RIBONUCLEASE H1"/>
    <property type="match status" value="1"/>
</dbReference>
<dbReference type="Pfam" id="PF00075">
    <property type="entry name" value="RNase_H"/>
    <property type="match status" value="1"/>
</dbReference>
<dbReference type="SUPFAM" id="SSF53098">
    <property type="entry name" value="Ribonuclease H-like"/>
    <property type="match status" value="1"/>
</dbReference>
<dbReference type="PROSITE" id="PS50879">
    <property type="entry name" value="RNASE_H_1"/>
    <property type="match status" value="1"/>
</dbReference>
<accession>A1VMW5</accession>
<gene>
    <name evidence="1" type="primary">rnhA</name>
    <name type="ordered locus">Pnap_1680</name>
</gene>
<proteinExistence type="inferred from homology"/>